<protein>
    <recommendedName>
        <fullName>Protein NRT1/ PTR FAMILY 5.13</fullName>
        <shortName>AtNPF5.13</shortName>
    </recommendedName>
    <alternativeName>
        <fullName>Nitrate transporter 1.16</fullName>
    </alternativeName>
</protein>
<organism>
    <name type="scientific">Arabidopsis thaliana</name>
    <name type="common">Mouse-ear cress</name>
    <dbReference type="NCBI Taxonomy" id="3702"/>
    <lineage>
        <taxon>Eukaryota</taxon>
        <taxon>Viridiplantae</taxon>
        <taxon>Streptophyta</taxon>
        <taxon>Embryophyta</taxon>
        <taxon>Tracheophyta</taxon>
        <taxon>Spermatophyta</taxon>
        <taxon>Magnoliopsida</taxon>
        <taxon>eudicotyledons</taxon>
        <taxon>Gunneridae</taxon>
        <taxon>Pentapetalae</taxon>
        <taxon>rosids</taxon>
        <taxon>malvids</taxon>
        <taxon>Brassicales</taxon>
        <taxon>Brassicaceae</taxon>
        <taxon>Camelineae</taxon>
        <taxon>Arabidopsis</taxon>
    </lineage>
</organism>
<keyword id="KW-0472">Membrane</keyword>
<keyword id="KW-0597">Phosphoprotein</keyword>
<keyword id="KW-1185">Reference proteome</keyword>
<keyword id="KW-0812">Transmembrane</keyword>
<keyword id="KW-1133">Transmembrane helix</keyword>
<keyword id="KW-0813">Transport</keyword>
<reference key="1">
    <citation type="journal article" date="2000" name="Nature">
        <title>Sequence and analysis of chromosome 1 of the plant Arabidopsis thaliana.</title>
        <authorList>
            <person name="Theologis A."/>
            <person name="Ecker J.R."/>
            <person name="Palm C.J."/>
            <person name="Federspiel N.A."/>
            <person name="Kaul S."/>
            <person name="White O."/>
            <person name="Alonso J."/>
            <person name="Altafi H."/>
            <person name="Araujo R."/>
            <person name="Bowman C.L."/>
            <person name="Brooks S.Y."/>
            <person name="Buehler E."/>
            <person name="Chan A."/>
            <person name="Chao Q."/>
            <person name="Chen H."/>
            <person name="Cheuk R.F."/>
            <person name="Chin C.W."/>
            <person name="Chung M.K."/>
            <person name="Conn L."/>
            <person name="Conway A.B."/>
            <person name="Conway A.R."/>
            <person name="Creasy T.H."/>
            <person name="Dewar K."/>
            <person name="Dunn P."/>
            <person name="Etgu P."/>
            <person name="Feldblyum T.V."/>
            <person name="Feng J.-D."/>
            <person name="Fong B."/>
            <person name="Fujii C.Y."/>
            <person name="Gill J.E."/>
            <person name="Goldsmith A.D."/>
            <person name="Haas B."/>
            <person name="Hansen N.F."/>
            <person name="Hughes B."/>
            <person name="Huizar L."/>
            <person name="Hunter J.L."/>
            <person name="Jenkins J."/>
            <person name="Johnson-Hopson C."/>
            <person name="Khan S."/>
            <person name="Khaykin E."/>
            <person name="Kim C.J."/>
            <person name="Koo H.L."/>
            <person name="Kremenetskaia I."/>
            <person name="Kurtz D.B."/>
            <person name="Kwan A."/>
            <person name="Lam B."/>
            <person name="Langin-Hooper S."/>
            <person name="Lee A."/>
            <person name="Lee J.M."/>
            <person name="Lenz C.A."/>
            <person name="Li J.H."/>
            <person name="Li Y.-P."/>
            <person name="Lin X."/>
            <person name="Liu S.X."/>
            <person name="Liu Z.A."/>
            <person name="Luros J.S."/>
            <person name="Maiti R."/>
            <person name="Marziali A."/>
            <person name="Militscher J."/>
            <person name="Miranda M."/>
            <person name="Nguyen M."/>
            <person name="Nierman W.C."/>
            <person name="Osborne B.I."/>
            <person name="Pai G."/>
            <person name="Peterson J."/>
            <person name="Pham P.K."/>
            <person name="Rizzo M."/>
            <person name="Rooney T."/>
            <person name="Rowley D."/>
            <person name="Sakano H."/>
            <person name="Salzberg S.L."/>
            <person name="Schwartz J.R."/>
            <person name="Shinn P."/>
            <person name="Southwick A.M."/>
            <person name="Sun H."/>
            <person name="Tallon L.J."/>
            <person name="Tambunga G."/>
            <person name="Toriumi M.J."/>
            <person name="Town C.D."/>
            <person name="Utterback T."/>
            <person name="Van Aken S."/>
            <person name="Vaysberg M."/>
            <person name="Vysotskaia V.S."/>
            <person name="Walker M."/>
            <person name="Wu D."/>
            <person name="Yu G."/>
            <person name="Fraser C.M."/>
            <person name="Venter J.C."/>
            <person name="Davis R.W."/>
        </authorList>
    </citation>
    <scope>NUCLEOTIDE SEQUENCE [LARGE SCALE GENOMIC DNA]</scope>
    <source>
        <strain>cv. Columbia</strain>
    </source>
</reference>
<reference key="2">
    <citation type="journal article" date="2017" name="Plant J.">
        <title>Araport11: a complete reannotation of the Arabidopsis thaliana reference genome.</title>
        <authorList>
            <person name="Cheng C.Y."/>
            <person name="Krishnakumar V."/>
            <person name="Chan A.P."/>
            <person name="Thibaud-Nissen F."/>
            <person name="Schobel S."/>
            <person name="Town C.D."/>
        </authorList>
    </citation>
    <scope>GENOME REANNOTATION</scope>
    <source>
        <strain>cv. Columbia</strain>
    </source>
</reference>
<reference key="3">
    <citation type="submission" date="2006-07" db="EMBL/GenBank/DDBJ databases">
        <title>Large-scale analysis of RIKEN Arabidopsis full-length (RAFL) cDNAs.</title>
        <authorList>
            <person name="Totoki Y."/>
            <person name="Seki M."/>
            <person name="Ishida J."/>
            <person name="Nakajima M."/>
            <person name="Enju A."/>
            <person name="Kamiya A."/>
            <person name="Narusaka M."/>
            <person name="Shin-i T."/>
            <person name="Nakagawa M."/>
            <person name="Sakamoto N."/>
            <person name="Oishi K."/>
            <person name="Kohara Y."/>
            <person name="Kobayashi M."/>
            <person name="Toyoda A."/>
            <person name="Sakaki Y."/>
            <person name="Sakurai T."/>
            <person name="Iida K."/>
            <person name="Akiyama K."/>
            <person name="Satou M."/>
            <person name="Toyoda T."/>
            <person name="Konagaya A."/>
            <person name="Carninci P."/>
            <person name="Kawai J."/>
            <person name="Hayashizaki Y."/>
            <person name="Shinozaki K."/>
        </authorList>
    </citation>
    <scope>NUCLEOTIDE SEQUENCE [LARGE SCALE MRNA] OF 143-561</scope>
    <source>
        <strain>cv. Columbia</strain>
    </source>
</reference>
<reference key="4">
    <citation type="journal article" date="2007" name="FEBS Lett.">
        <title>Nitrate transporters and peptide transporters.</title>
        <authorList>
            <person name="Tsay Y.F."/>
            <person name="Chiu C.C."/>
            <person name="Tsai C.B."/>
            <person name="Ho C.H."/>
            <person name="Hsu P.K."/>
        </authorList>
    </citation>
    <scope>TISSUE SPECIFICITY</scope>
    <scope>GENE FAMILY</scope>
</reference>
<reference key="5">
    <citation type="journal article" date="2010" name="Plant Cell">
        <title>The Arabidopsis nitrate transporter NRT1.8 functions in nitrate removal from the xylem sap and mediates cadmium tolerance.</title>
        <authorList>
            <person name="Li J.Y."/>
            <person name="Fu Y.L."/>
            <person name="Pike S.M."/>
            <person name="Bao J."/>
            <person name="Tian W."/>
            <person name="Zhang Y."/>
            <person name="Chen C.Z."/>
            <person name="Zhang Y."/>
            <person name="Li H.M."/>
            <person name="Huang J."/>
            <person name="Li L.G."/>
            <person name="Schroeder J.I."/>
            <person name="Gassmann W."/>
            <person name="Gong J.M."/>
        </authorList>
    </citation>
    <scope>GENE FAMILY</scope>
</reference>
<reference key="6">
    <citation type="journal article" date="2014" name="Trends Plant Sci.">
        <title>A unified nomenclature of NITRATE TRANSPORTER 1/PEPTIDE TRANSPORTER family members in plants.</title>
        <authorList>
            <person name="Leran S."/>
            <person name="Varala K."/>
            <person name="Boyer J.C."/>
            <person name="Chiurazzi M."/>
            <person name="Crawford N."/>
            <person name="Daniel-Vedele F."/>
            <person name="David L."/>
            <person name="Dickstein R."/>
            <person name="Fernandez E."/>
            <person name="Forde B."/>
            <person name="Gassmann W."/>
            <person name="Geiger D."/>
            <person name="Gojon A."/>
            <person name="Gong J.M."/>
            <person name="Halkier B.A."/>
            <person name="Harris J.M."/>
            <person name="Hedrich R."/>
            <person name="Limami A.M."/>
            <person name="Rentsch D."/>
            <person name="Seo M."/>
            <person name="Tsay Y.F."/>
            <person name="Zhang M."/>
            <person name="Coruzzi G."/>
            <person name="Lacombe B."/>
        </authorList>
    </citation>
    <scope>GENE FAMILY</scope>
    <scope>NOMENCLATURE</scope>
</reference>
<name>PTR23_ARATH</name>
<accession>Q0WSZ6</accession>
<accession>Q9C7H5</accession>
<gene>
    <name type="primary">NPF5.13</name>
    <name type="synonym">NRT1.16</name>
    <name type="ordered locus">At1g72125</name>
    <name type="ORF">F28P5.2</name>
</gene>
<feature type="chain" id="PRO_0000399957" description="Protein NRT1/ PTR FAMILY 5.13">
    <location>
        <begin position="1"/>
        <end position="561"/>
    </location>
</feature>
<feature type="transmembrane region" description="Helical" evidence="3">
    <location>
        <begin position="78"/>
        <end position="98"/>
    </location>
</feature>
<feature type="transmembrane region" description="Helical" evidence="3">
    <location>
        <begin position="104"/>
        <end position="124"/>
    </location>
</feature>
<feature type="transmembrane region" description="Helical" evidence="3">
    <location>
        <begin position="133"/>
        <end position="153"/>
    </location>
</feature>
<feature type="transmembrane region" description="Helical" evidence="3">
    <location>
        <begin position="183"/>
        <end position="203"/>
    </location>
</feature>
<feature type="transmembrane region" description="Helical" evidence="3">
    <location>
        <begin position="211"/>
        <end position="231"/>
    </location>
</feature>
<feature type="transmembrane region" description="Helical" evidence="3">
    <location>
        <begin position="324"/>
        <end position="344"/>
    </location>
</feature>
<feature type="transmembrane region" description="Helical" evidence="3">
    <location>
        <begin position="361"/>
        <end position="381"/>
    </location>
</feature>
<feature type="transmembrane region" description="Helical" evidence="3">
    <location>
        <begin position="405"/>
        <end position="425"/>
    </location>
</feature>
<feature type="transmembrane region" description="Helical" evidence="3">
    <location>
        <begin position="447"/>
        <end position="467"/>
    </location>
</feature>
<feature type="transmembrane region" description="Helical" evidence="3">
    <location>
        <begin position="486"/>
        <end position="506"/>
    </location>
</feature>
<feature type="transmembrane region" description="Helical" evidence="3">
    <location>
        <begin position="530"/>
        <end position="550"/>
    </location>
</feature>
<feature type="modified residue" description="Phosphothreonine" evidence="2">
    <location>
        <position position="103"/>
    </location>
</feature>
<dbReference type="EMBL" id="AC069273">
    <property type="protein sequence ID" value="AAG51133.1"/>
    <property type="status" value="ALT_SEQ"/>
    <property type="molecule type" value="Genomic_DNA"/>
</dbReference>
<dbReference type="EMBL" id="CP002684">
    <property type="protein sequence ID" value="AEE35277.1"/>
    <property type="molecule type" value="Genomic_DNA"/>
</dbReference>
<dbReference type="EMBL" id="AK227770">
    <property type="protein sequence ID" value="BAE99752.1"/>
    <property type="status" value="ALT_SEQ"/>
    <property type="molecule type" value="mRNA"/>
</dbReference>
<dbReference type="PIR" id="E96744">
    <property type="entry name" value="E96744"/>
</dbReference>
<dbReference type="RefSeq" id="NP_001117585.1">
    <property type="nucleotide sequence ID" value="NM_001124113.2"/>
</dbReference>
<dbReference type="SMR" id="Q0WSZ6"/>
<dbReference type="FunCoup" id="Q0WSZ6">
    <property type="interactions" value="388"/>
</dbReference>
<dbReference type="STRING" id="3702.Q0WSZ6"/>
<dbReference type="iPTMnet" id="Q0WSZ6"/>
<dbReference type="PaxDb" id="3702-AT1G72125.1"/>
<dbReference type="ProteomicsDB" id="226447"/>
<dbReference type="EnsemblPlants" id="AT1G72125.1">
    <property type="protein sequence ID" value="AT1G72125.1"/>
    <property type="gene ID" value="AT1G72125"/>
</dbReference>
<dbReference type="GeneID" id="6241212"/>
<dbReference type="Gramene" id="AT1G72125.1">
    <property type="protein sequence ID" value="AT1G72125.1"/>
    <property type="gene ID" value="AT1G72125"/>
</dbReference>
<dbReference type="KEGG" id="ath:AT1G72125"/>
<dbReference type="Araport" id="AT1G72125"/>
<dbReference type="TAIR" id="AT1G72125">
    <property type="gene designation" value="NPF5.13"/>
</dbReference>
<dbReference type="eggNOG" id="KOG1237">
    <property type="taxonomic scope" value="Eukaryota"/>
</dbReference>
<dbReference type="HOGENOM" id="CLU_009313_4_1_1"/>
<dbReference type="InParanoid" id="Q0WSZ6"/>
<dbReference type="OMA" id="CVADAWI"/>
<dbReference type="PhylomeDB" id="Q0WSZ6"/>
<dbReference type="PRO" id="PR:Q0WSZ6"/>
<dbReference type="Proteomes" id="UP000006548">
    <property type="component" value="Chromosome 1"/>
</dbReference>
<dbReference type="ExpressionAtlas" id="Q0WSZ6">
    <property type="expression patterns" value="baseline and differential"/>
</dbReference>
<dbReference type="GO" id="GO:0016020">
    <property type="term" value="C:membrane"/>
    <property type="evidence" value="ECO:0007669"/>
    <property type="project" value="UniProtKB-SubCell"/>
</dbReference>
<dbReference type="GO" id="GO:0071916">
    <property type="term" value="F:dipeptide transmembrane transporter activity"/>
    <property type="evidence" value="ECO:0007669"/>
    <property type="project" value="InterPro"/>
</dbReference>
<dbReference type="GO" id="GO:0042937">
    <property type="term" value="F:tripeptide transmembrane transporter activity"/>
    <property type="evidence" value="ECO:0007669"/>
    <property type="project" value="InterPro"/>
</dbReference>
<dbReference type="CDD" id="cd17417">
    <property type="entry name" value="MFS_NPF5"/>
    <property type="match status" value="1"/>
</dbReference>
<dbReference type="FunFam" id="1.20.1250.20:FF:000147">
    <property type="entry name" value="Protein NRT1/ PTR family 5.10"/>
    <property type="match status" value="1"/>
</dbReference>
<dbReference type="Gene3D" id="1.20.1250.20">
    <property type="entry name" value="MFS general substrate transporter like domains"/>
    <property type="match status" value="1"/>
</dbReference>
<dbReference type="InterPro" id="IPR036259">
    <property type="entry name" value="MFS_trans_sf"/>
</dbReference>
<dbReference type="InterPro" id="IPR044739">
    <property type="entry name" value="NRT1/PTR"/>
</dbReference>
<dbReference type="InterPro" id="IPR000109">
    <property type="entry name" value="POT_fam"/>
</dbReference>
<dbReference type="InterPro" id="IPR018456">
    <property type="entry name" value="PTR2_symporter_CS"/>
</dbReference>
<dbReference type="PANTHER" id="PTHR11654">
    <property type="entry name" value="OLIGOPEPTIDE TRANSPORTER-RELATED"/>
    <property type="match status" value="1"/>
</dbReference>
<dbReference type="Pfam" id="PF00854">
    <property type="entry name" value="PTR2"/>
    <property type="match status" value="1"/>
</dbReference>
<dbReference type="SUPFAM" id="SSF103473">
    <property type="entry name" value="MFS general substrate transporter"/>
    <property type="match status" value="1"/>
</dbReference>
<dbReference type="PROSITE" id="PS01022">
    <property type="entry name" value="PTR2_1"/>
    <property type="match status" value="1"/>
</dbReference>
<evidence type="ECO:0000250" key="1"/>
<evidence type="ECO:0000250" key="2">
    <source>
        <dbReference type="UniProtKB" id="Q05085"/>
    </source>
</evidence>
<evidence type="ECO:0000255" key="3"/>
<evidence type="ECO:0000269" key="4">
    <source>
    </source>
</evidence>
<evidence type="ECO:0000305" key="5"/>
<proteinExistence type="evidence at transcript level"/>
<sequence>MTTTSKTSLQEEYVIDAVDHRGFSARRSITGRWRAAWFIIGVEVAERFANYGIGSNLISYLTGPLGQSTAVAAANVNAWSGISTILPLLGAFVADAFLGRYITIIIASFIYVLGLAFLTLSAFLIPNNTEVTSSPSSFLNALFFFSLYLVAIGQSGHKPCVQAFGADQFDEKNPQENSDRSSFFNWWYLSMCAGIGLAILVVVYIQENVSWALGFGIPCVFMVISLVLFVLGRKSYRFSKTRQEEETNPFTRIGRVFFVAFKNQRLNSSDLCKVELIEANRSQESPEELSFLNKALLVPNDSDEGEVACKSRDVEDATALVRLIPVWLTTLAYAIPFAQYMTFFTKQGVTMERTIFPGVEIPPASLQVLISISIVLFVPIYDRVLVPIGRSITKDPCGITTLKRIGTGMVLATLTMVVAALVESKRLETAKEYGLIDQPKTTLPMSIWWLFPQYMLLGLADVHTLVGMQEFFYSQVPTELRSLGLAIYLSAMGVGSLLSSLLIYLIDLATGGDAGNSWFNSNLNRAHLDYFYWLLAVVSAVGFFTFLFISKSYIYRRVDVV</sequence>
<comment type="subcellular location">
    <subcellularLocation>
        <location evidence="1">Membrane</location>
        <topology evidence="1">Multi-pass membrane protein</topology>
    </subcellularLocation>
</comment>
<comment type="tissue specificity">
    <text evidence="4">Expressed in roots, flowers and siliques. Detected in stems and leaves.</text>
</comment>
<comment type="similarity">
    <text evidence="5">Belongs to the major facilitator superfamily. Proton-dependent oligopeptide transporter (POT/PTR) (TC 2.A.17) family.</text>
</comment>
<comment type="sequence caution" evidence="5">
    <conflict type="erroneous gene model prediction">
        <sequence resource="EMBL-CDS" id="AAG51133"/>
    </conflict>
    <text>The predicted gene At1g72120 has been split into 2 genes: At1g72120 and At1g72115.</text>
</comment>
<comment type="sequence caution" evidence="5">
    <conflict type="miscellaneous discrepancy">
        <sequence resource="EMBL-CDS" id="BAE99752"/>
    </conflict>
    <text>Chimeric cDNA. Its 3'- and 5'-sequences are derived from the gene At4g26240.</text>
</comment>